<comment type="function">
    <text evidence="1">Transcription regulator that activates transcription by stimulating RNA polymerase (RNAP) recycling in case of stress conditions such as supercoiled DNA or high salt concentrations. Probably acts by releasing the RNAP, when it is trapped or immobilized on tightly supercoiled DNA. Does not activate transcription on linear DNA. Probably not involved in DNA repair.</text>
</comment>
<comment type="subunit">
    <text evidence="1">Interacts with the RNAP. Has a higher affinity for the core RNAP than for the holoenzyme. Its ATPase activity is stimulated by binding to RNAP.</text>
</comment>
<comment type="similarity">
    <text evidence="1">Belongs to the SNF2/RAD54 helicase family. RapA subfamily.</text>
</comment>
<feature type="chain" id="PRO_1000188185" description="RNA polymerase-associated protein RapA">
    <location>
        <begin position="1"/>
        <end position="968"/>
    </location>
</feature>
<feature type="domain" description="Helicase ATP-binding" evidence="1">
    <location>
        <begin position="164"/>
        <end position="334"/>
    </location>
</feature>
<feature type="domain" description="Helicase C-terminal" evidence="1">
    <location>
        <begin position="490"/>
        <end position="685"/>
    </location>
</feature>
<feature type="short sequence motif" description="DEAH box">
    <location>
        <begin position="280"/>
        <end position="283"/>
    </location>
</feature>
<feature type="binding site" evidence="1">
    <location>
        <begin position="177"/>
        <end position="184"/>
    </location>
    <ligand>
        <name>ATP</name>
        <dbReference type="ChEBI" id="CHEBI:30616"/>
    </ligand>
</feature>
<keyword id="KW-0010">Activator</keyword>
<keyword id="KW-0067">ATP-binding</keyword>
<keyword id="KW-0238">DNA-binding</keyword>
<keyword id="KW-0347">Helicase</keyword>
<keyword id="KW-0378">Hydrolase</keyword>
<keyword id="KW-0547">Nucleotide-binding</keyword>
<keyword id="KW-0804">Transcription</keyword>
<keyword id="KW-0805">Transcription regulation</keyword>
<accession>B5R1T4</accession>
<name>RAPA_SALEP</name>
<gene>
    <name evidence="1" type="primary">rapA</name>
    <name type="ordered locus">SEN0098</name>
</gene>
<evidence type="ECO:0000255" key="1">
    <source>
        <dbReference type="HAMAP-Rule" id="MF_01821"/>
    </source>
</evidence>
<proteinExistence type="inferred from homology"/>
<sequence length="968" mass="109839">MPFTLGQRWISDTESELGLGTVVAMDARTVTLLFPSTGENRLYARSDSPVTRVMFNPGDTITSHEGWQLHIDEVKEENGLLVYVGTRLDTEETNVTLREVLLDSKLVFSKPQDRLFAGQIDRMDRFALRYRARKFQSEQYRMPYSGLRGQRTNLIPHQLNIAHDVGRRHAPRVLLADEVGLGKTIEAGMILHQQLLSGAAERVLIIVPETLQHQWLVEMLRRFNLRFALFDDERYTEAQHDAYNPFETEQLVICSLDFARRNKQRLEHLCDAEWDLLVVDEAHHLVWSTDAPSREYMAIEQLAERVPGVLLLTATPEQLGMESHFARLRLLDPNRFHDFEQFVEEQKNYRPVADAVAMLLAGNKLSNDELNRLGDLIGEQDIEPLLQAANSDRDDAQAARDELVSMLMDRHGTSRVLFRNTRNGVKGFPKRELHTVKLPLPTQYQTAIKVSGIMGARKSAEDRARDMLYPEQIYQEFEGDTGTWWNFDPRVEWLMGYLTSHRSQKVLVICAKATTALQLEQVLREREGIRAAVFHEGMSIIERDRAAAWFAEEDTGAQVLLCSEIGSEGRNFQFASNLVMFDLPFNPDLLEQRIGRLDRIGQAHDIQIHVPYLEKTAQSVLVRWYHEGLDAFEHTCPTGRAIYDSAYASLINYLAAPEETDGFDDLIKSCREQHEALKAQLEQGRDRLLEIHSNGGEKAQQLAQSIEEQDDDTNLIAFAMNLFDIVGINQDDRGDNLIVLTPSDHMLVPDFPGLPEDGCTITFERDVALSREDAQFITWEHPLIRNGLDLILSGDTGSSTISLLKNKALPVGTLLVELVYVVEAQAPKQLQLNRFLPPTPVRMLLDKNGNNLAAQVEFETFNRQLSAVNRHTGSKLVNAVQQDVHAILQLGETQIEKSARALIDNARREADEKLSGELSRLEALRAVNPNIRDDELAAIDSNRQQVLESLNQAGWRLDALRLIVVTHQ</sequence>
<organism>
    <name type="scientific">Salmonella enteritidis PT4 (strain P125109)</name>
    <dbReference type="NCBI Taxonomy" id="550537"/>
    <lineage>
        <taxon>Bacteria</taxon>
        <taxon>Pseudomonadati</taxon>
        <taxon>Pseudomonadota</taxon>
        <taxon>Gammaproteobacteria</taxon>
        <taxon>Enterobacterales</taxon>
        <taxon>Enterobacteriaceae</taxon>
        <taxon>Salmonella</taxon>
    </lineage>
</organism>
<protein>
    <recommendedName>
        <fullName evidence="1">RNA polymerase-associated protein RapA</fullName>
        <ecNumber evidence="1">3.6.4.-</ecNumber>
    </recommendedName>
    <alternativeName>
        <fullName evidence="1">ATP-dependent helicase HepA</fullName>
    </alternativeName>
</protein>
<dbReference type="EC" id="3.6.4.-" evidence="1"/>
<dbReference type="EMBL" id="AM933172">
    <property type="protein sequence ID" value="CAR31685.1"/>
    <property type="molecule type" value="Genomic_DNA"/>
</dbReference>
<dbReference type="RefSeq" id="WP_001116966.1">
    <property type="nucleotide sequence ID" value="NC_011294.1"/>
</dbReference>
<dbReference type="SMR" id="B5R1T4"/>
<dbReference type="KEGG" id="set:SEN0098"/>
<dbReference type="HOGENOM" id="CLU_011520_0_0_6"/>
<dbReference type="Proteomes" id="UP000000613">
    <property type="component" value="Chromosome"/>
</dbReference>
<dbReference type="GO" id="GO:0005524">
    <property type="term" value="F:ATP binding"/>
    <property type="evidence" value="ECO:0007669"/>
    <property type="project" value="UniProtKB-UniRule"/>
</dbReference>
<dbReference type="GO" id="GO:0003677">
    <property type="term" value="F:DNA binding"/>
    <property type="evidence" value="ECO:0007669"/>
    <property type="project" value="UniProtKB-KW"/>
</dbReference>
<dbReference type="GO" id="GO:0004386">
    <property type="term" value="F:helicase activity"/>
    <property type="evidence" value="ECO:0007669"/>
    <property type="project" value="UniProtKB-UniRule"/>
</dbReference>
<dbReference type="GO" id="GO:0016817">
    <property type="term" value="F:hydrolase activity, acting on acid anhydrides"/>
    <property type="evidence" value="ECO:0007669"/>
    <property type="project" value="InterPro"/>
</dbReference>
<dbReference type="GO" id="GO:0006355">
    <property type="term" value="P:regulation of DNA-templated transcription"/>
    <property type="evidence" value="ECO:0007669"/>
    <property type="project" value="UniProtKB-UniRule"/>
</dbReference>
<dbReference type="CDD" id="cd18011">
    <property type="entry name" value="DEXDc_RapA"/>
    <property type="match status" value="1"/>
</dbReference>
<dbReference type="CDD" id="cd18793">
    <property type="entry name" value="SF2_C_SNF"/>
    <property type="match status" value="1"/>
</dbReference>
<dbReference type="FunFam" id="2.30.30.140:FF:000020">
    <property type="entry name" value="RNA polymerase-associated protein RapA"/>
    <property type="match status" value="1"/>
</dbReference>
<dbReference type="FunFam" id="3.30.360.80:FF:000001">
    <property type="entry name" value="RNA polymerase-associated protein RapA"/>
    <property type="match status" value="1"/>
</dbReference>
<dbReference type="FunFam" id="3.40.50.10810:FF:000012">
    <property type="entry name" value="RNA polymerase-associated protein RapA"/>
    <property type="match status" value="1"/>
</dbReference>
<dbReference type="FunFam" id="3.40.50.300:FF:000350">
    <property type="entry name" value="RNA polymerase-associated protein RapA"/>
    <property type="match status" value="1"/>
</dbReference>
<dbReference type="Gene3D" id="2.30.30.140">
    <property type="match status" value="1"/>
</dbReference>
<dbReference type="Gene3D" id="2.30.30.930">
    <property type="match status" value="1"/>
</dbReference>
<dbReference type="Gene3D" id="3.30.360.80">
    <property type="match status" value="1"/>
</dbReference>
<dbReference type="Gene3D" id="6.10.140.1500">
    <property type="match status" value="1"/>
</dbReference>
<dbReference type="Gene3D" id="6.10.140.2230">
    <property type="match status" value="1"/>
</dbReference>
<dbReference type="Gene3D" id="3.40.50.300">
    <property type="entry name" value="P-loop containing nucleotide triphosphate hydrolases"/>
    <property type="match status" value="1"/>
</dbReference>
<dbReference type="Gene3D" id="3.40.50.10810">
    <property type="entry name" value="Tandem AAA-ATPase domain"/>
    <property type="match status" value="1"/>
</dbReference>
<dbReference type="HAMAP" id="MF_01821">
    <property type="entry name" value="Helicase_RapA"/>
    <property type="match status" value="1"/>
</dbReference>
<dbReference type="InterPro" id="IPR014001">
    <property type="entry name" value="Helicase_ATP-bd"/>
</dbReference>
<dbReference type="InterPro" id="IPR001650">
    <property type="entry name" value="Helicase_C-like"/>
</dbReference>
<dbReference type="InterPro" id="IPR023949">
    <property type="entry name" value="Helicase_RapA"/>
</dbReference>
<dbReference type="InterPro" id="IPR027417">
    <property type="entry name" value="P-loop_NTPase"/>
</dbReference>
<dbReference type="InterPro" id="IPR022737">
    <property type="entry name" value="RapA_C"/>
</dbReference>
<dbReference type="InterPro" id="IPR038718">
    <property type="entry name" value="SNF2-like_sf"/>
</dbReference>
<dbReference type="InterPro" id="IPR049730">
    <property type="entry name" value="SNF2/RAD54-like_C"/>
</dbReference>
<dbReference type="InterPro" id="IPR000330">
    <property type="entry name" value="SNF2_N"/>
</dbReference>
<dbReference type="InterPro" id="IPR040765">
    <property type="entry name" value="Tudor_1_RapA"/>
</dbReference>
<dbReference type="InterPro" id="IPR040766">
    <property type="entry name" value="Tudor_2_RapA"/>
</dbReference>
<dbReference type="NCBIfam" id="NF003426">
    <property type="entry name" value="PRK04914.1"/>
    <property type="match status" value="1"/>
</dbReference>
<dbReference type="PANTHER" id="PTHR45766">
    <property type="entry name" value="DNA ANNEALING HELICASE AND ENDONUCLEASE ZRANB3 FAMILY MEMBER"/>
    <property type="match status" value="1"/>
</dbReference>
<dbReference type="PANTHER" id="PTHR45766:SF6">
    <property type="entry name" value="SWI_SNF-RELATED MATRIX-ASSOCIATED ACTIN-DEPENDENT REGULATOR OF CHROMATIN SUBFAMILY A-LIKE PROTEIN 1"/>
    <property type="match status" value="1"/>
</dbReference>
<dbReference type="Pfam" id="PF00271">
    <property type="entry name" value="Helicase_C"/>
    <property type="match status" value="1"/>
</dbReference>
<dbReference type="Pfam" id="PF12137">
    <property type="entry name" value="RapA_C"/>
    <property type="match status" value="1"/>
</dbReference>
<dbReference type="Pfam" id="PF00176">
    <property type="entry name" value="SNF2-rel_dom"/>
    <property type="match status" value="1"/>
</dbReference>
<dbReference type="Pfam" id="PF18339">
    <property type="entry name" value="Tudor_1_RapA"/>
    <property type="match status" value="1"/>
</dbReference>
<dbReference type="Pfam" id="PF18337">
    <property type="entry name" value="Tudor_RapA"/>
    <property type="match status" value="1"/>
</dbReference>
<dbReference type="SMART" id="SM00487">
    <property type="entry name" value="DEXDc"/>
    <property type="match status" value="1"/>
</dbReference>
<dbReference type="SMART" id="SM00490">
    <property type="entry name" value="HELICc"/>
    <property type="match status" value="1"/>
</dbReference>
<dbReference type="SUPFAM" id="SSF52540">
    <property type="entry name" value="P-loop containing nucleoside triphosphate hydrolases"/>
    <property type="match status" value="2"/>
</dbReference>
<dbReference type="PROSITE" id="PS51192">
    <property type="entry name" value="HELICASE_ATP_BIND_1"/>
    <property type="match status" value="1"/>
</dbReference>
<dbReference type="PROSITE" id="PS51194">
    <property type="entry name" value="HELICASE_CTER"/>
    <property type="match status" value="1"/>
</dbReference>
<reference key="1">
    <citation type="journal article" date="2008" name="Genome Res.">
        <title>Comparative genome analysis of Salmonella enteritidis PT4 and Salmonella gallinarum 287/91 provides insights into evolutionary and host adaptation pathways.</title>
        <authorList>
            <person name="Thomson N.R."/>
            <person name="Clayton D.J."/>
            <person name="Windhorst D."/>
            <person name="Vernikos G."/>
            <person name="Davidson S."/>
            <person name="Churcher C."/>
            <person name="Quail M.A."/>
            <person name="Stevens M."/>
            <person name="Jones M.A."/>
            <person name="Watson M."/>
            <person name="Barron A."/>
            <person name="Layton A."/>
            <person name="Pickard D."/>
            <person name="Kingsley R.A."/>
            <person name="Bignell A."/>
            <person name="Clark L."/>
            <person name="Harris B."/>
            <person name="Ormond D."/>
            <person name="Abdellah Z."/>
            <person name="Brooks K."/>
            <person name="Cherevach I."/>
            <person name="Chillingworth T."/>
            <person name="Woodward J."/>
            <person name="Norberczak H."/>
            <person name="Lord A."/>
            <person name="Arrowsmith C."/>
            <person name="Jagels K."/>
            <person name="Moule S."/>
            <person name="Mungall K."/>
            <person name="Saunders M."/>
            <person name="Whitehead S."/>
            <person name="Chabalgoity J.A."/>
            <person name="Maskell D."/>
            <person name="Humphreys T."/>
            <person name="Roberts M."/>
            <person name="Barrow P.A."/>
            <person name="Dougan G."/>
            <person name="Parkhill J."/>
        </authorList>
    </citation>
    <scope>NUCLEOTIDE SEQUENCE [LARGE SCALE GENOMIC DNA]</scope>
    <source>
        <strain>P125109</strain>
    </source>
</reference>